<name>MYO9_ARATH</name>
<keyword id="KW-0009">Actin-binding</keyword>
<keyword id="KW-0067">ATP-binding</keyword>
<keyword id="KW-0112">Calmodulin-binding</keyword>
<keyword id="KW-0175">Coiled coil</keyword>
<keyword id="KW-0505">Motor protein</keyword>
<keyword id="KW-0518">Myosin</keyword>
<keyword id="KW-0547">Nucleotide-binding</keyword>
<keyword id="KW-1185">Reference proteome</keyword>
<keyword id="KW-0677">Repeat</keyword>
<gene>
    <name type="primary">XI-C</name>
    <name type="synonym">XIC</name>
    <name type="ordered locus">At1g08730</name>
    <name type="ORF">F22O13.20</name>
</gene>
<feature type="chain" id="PRO_0000422864" description="Myosin-9">
    <location>
        <begin position="1"/>
        <end position="1538"/>
    </location>
</feature>
<feature type="domain" description="Myosin N-terminal SH3-like" evidence="6">
    <location>
        <begin position="16"/>
        <end position="65"/>
    </location>
</feature>
<feature type="domain" description="Myosin motor" evidence="5">
    <location>
        <begin position="70"/>
        <end position="740"/>
    </location>
</feature>
<feature type="domain" description="IQ 1" evidence="3">
    <location>
        <begin position="743"/>
        <end position="772"/>
    </location>
</feature>
<feature type="domain" description="IQ 2" evidence="3">
    <location>
        <begin position="766"/>
        <end position="795"/>
    </location>
</feature>
<feature type="domain" description="IQ 3" evidence="3">
    <location>
        <begin position="791"/>
        <end position="820"/>
    </location>
</feature>
<feature type="domain" description="IQ 4" evidence="3">
    <location>
        <begin position="814"/>
        <end position="843"/>
    </location>
</feature>
<feature type="domain" description="IQ 5" evidence="3">
    <location>
        <begin position="839"/>
        <end position="868"/>
    </location>
</feature>
<feature type="domain" description="IQ 6" evidence="3">
    <location>
        <begin position="862"/>
        <end position="891"/>
    </location>
</feature>
<feature type="domain" description="Dilute" evidence="4">
    <location>
        <begin position="1168"/>
        <end position="1481"/>
    </location>
</feature>
<feature type="region of interest" description="Actin-binding" evidence="2">
    <location>
        <begin position="503"/>
        <end position="537"/>
    </location>
</feature>
<feature type="region of interest" description="Actin-binding" evidence="2">
    <location>
        <begin position="539"/>
        <end position="562"/>
    </location>
</feature>
<feature type="region of interest" description="Actin-binding" evidence="2">
    <location>
        <begin position="597"/>
        <end position="621"/>
    </location>
</feature>
<feature type="region of interest" description="Actin-binding" evidence="1">
    <location>
        <begin position="621"/>
        <end position="643"/>
    </location>
</feature>
<feature type="region of interest" description="Disordered" evidence="7">
    <location>
        <begin position="1017"/>
        <end position="1041"/>
    </location>
</feature>
<feature type="region of interest" description="Disordered" evidence="7">
    <location>
        <begin position="1098"/>
        <end position="1121"/>
    </location>
</feature>
<feature type="coiled-coil region" evidence="2">
    <location>
        <begin position="892"/>
        <end position="1064"/>
    </location>
</feature>
<feature type="compositionally biased region" description="Basic and acidic residues" evidence="7">
    <location>
        <begin position="1017"/>
        <end position="1032"/>
    </location>
</feature>
<feature type="binding site" evidence="2">
    <location>
        <begin position="164"/>
        <end position="171"/>
    </location>
    <ligand>
        <name>ATP</name>
        <dbReference type="ChEBI" id="CHEBI:30616"/>
    </ligand>
</feature>
<feature type="binding site" evidence="2">
    <location>
        <begin position="217"/>
        <end position="225"/>
    </location>
    <ligand>
        <name>ATP</name>
        <dbReference type="ChEBI" id="CHEBI:30616"/>
    </ligand>
</feature>
<accession>F4HXP9</accession>
<accession>Q9FRR5</accession>
<dbReference type="EMBL" id="AC003981">
    <property type="protein sequence ID" value="AAF99762.1"/>
    <property type="status" value="ALT_SEQ"/>
    <property type="molecule type" value="Genomic_DNA"/>
</dbReference>
<dbReference type="EMBL" id="CP002684">
    <property type="protein sequence ID" value="AEE28340.1"/>
    <property type="molecule type" value="Genomic_DNA"/>
</dbReference>
<dbReference type="EMBL" id="BX816587">
    <property type="status" value="NOT_ANNOTATED_CDS"/>
    <property type="molecule type" value="mRNA"/>
</dbReference>
<dbReference type="PIR" id="T00727">
    <property type="entry name" value="T00727"/>
</dbReference>
<dbReference type="RefSeq" id="NP_172349.2">
    <property type="nucleotide sequence ID" value="NM_100746.3"/>
</dbReference>
<dbReference type="SMR" id="F4HXP9"/>
<dbReference type="FunCoup" id="F4HXP9">
    <property type="interactions" value="998"/>
</dbReference>
<dbReference type="STRING" id="3702.F4HXP9"/>
<dbReference type="iPTMnet" id="F4HXP9"/>
<dbReference type="PaxDb" id="3702-AT1G08730.1"/>
<dbReference type="EnsemblPlants" id="AT1G08730.1">
    <property type="protein sequence ID" value="AT1G08730.1"/>
    <property type="gene ID" value="AT1G08730"/>
</dbReference>
<dbReference type="GeneID" id="837394"/>
<dbReference type="Gramene" id="AT1G08730.1">
    <property type="protein sequence ID" value="AT1G08730.1"/>
    <property type="gene ID" value="AT1G08730"/>
</dbReference>
<dbReference type="KEGG" id="ath:AT1G08730"/>
<dbReference type="Araport" id="AT1G08730"/>
<dbReference type="TAIR" id="AT1G08730">
    <property type="gene designation" value="XIC"/>
</dbReference>
<dbReference type="eggNOG" id="KOG0160">
    <property type="taxonomic scope" value="Eukaryota"/>
</dbReference>
<dbReference type="HOGENOM" id="CLU_000192_3_0_1"/>
<dbReference type="InParanoid" id="F4HXP9"/>
<dbReference type="OMA" id="DMTALWL"/>
<dbReference type="PRO" id="PR:F4HXP9"/>
<dbReference type="Proteomes" id="UP000006548">
    <property type="component" value="Chromosome 1"/>
</dbReference>
<dbReference type="ExpressionAtlas" id="F4HXP9">
    <property type="expression patterns" value="baseline and differential"/>
</dbReference>
<dbReference type="GO" id="GO:0016459">
    <property type="term" value="C:myosin complex"/>
    <property type="evidence" value="ECO:0000250"/>
    <property type="project" value="TAIR"/>
</dbReference>
<dbReference type="GO" id="GO:0003779">
    <property type="term" value="F:actin binding"/>
    <property type="evidence" value="ECO:0007669"/>
    <property type="project" value="UniProtKB-KW"/>
</dbReference>
<dbReference type="GO" id="GO:0005524">
    <property type="term" value="F:ATP binding"/>
    <property type="evidence" value="ECO:0007669"/>
    <property type="project" value="UniProtKB-KW"/>
</dbReference>
<dbReference type="GO" id="GO:0005516">
    <property type="term" value="F:calmodulin binding"/>
    <property type="evidence" value="ECO:0007669"/>
    <property type="project" value="UniProtKB-KW"/>
</dbReference>
<dbReference type="GO" id="GO:0003774">
    <property type="term" value="F:cytoskeletal motor activity"/>
    <property type="evidence" value="ECO:0000250"/>
    <property type="project" value="TAIR"/>
</dbReference>
<dbReference type="GO" id="GO:0000146">
    <property type="term" value="F:microfilament motor activity"/>
    <property type="evidence" value="ECO:0000315"/>
    <property type="project" value="TAIR"/>
</dbReference>
<dbReference type="GO" id="GO:0007015">
    <property type="term" value="P:actin filament organization"/>
    <property type="evidence" value="ECO:0000316"/>
    <property type="project" value="TAIR"/>
</dbReference>
<dbReference type="GO" id="GO:0030048">
    <property type="term" value="P:actin filament-based movement"/>
    <property type="evidence" value="ECO:0000304"/>
    <property type="project" value="TAIR"/>
</dbReference>
<dbReference type="GO" id="GO:0051640">
    <property type="term" value="P:organelle localization"/>
    <property type="evidence" value="ECO:0000316"/>
    <property type="project" value="TAIR"/>
</dbReference>
<dbReference type="GO" id="GO:0009860">
    <property type="term" value="P:pollen tube growth"/>
    <property type="evidence" value="ECO:0000316"/>
    <property type="project" value="TAIR"/>
</dbReference>
<dbReference type="CDD" id="cd15475">
    <property type="entry name" value="MyosinXI_CBD"/>
    <property type="match status" value="1"/>
</dbReference>
<dbReference type="CDD" id="cd01384">
    <property type="entry name" value="MYSc_Myo11"/>
    <property type="match status" value="1"/>
</dbReference>
<dbReference type="FunFam" id="1.20.58.530:FF:000002">
    <property type="entry name" value="Class V myosin"/>
    <property type="match status" value="1"/>
</dbReference>
<dbReference type="FunFam" id="1.20.120.720:FF:000011">
    <property type="entry name" value="Myosin 2"/>
    <property type="match status" value="1"/>
</dbReference>
<dbReference type="FunFam" id="1.10.10.820:FF:000001">
    <property type="entry name" value="Myosin heavy chain"/>
    <property type="match status" value="1"/>
</dbReference>
<dbReference type="FunFam" id="1.20.5.190:FF:000001">
    <property type="entry name" value="unconventional myosin-Va"/>
    <property type="match status" value="3"/>
</dbReference>
<dbReference type="Gene3D" id="1.10.10.820">
    <property type="match status" value="1"/>
</dbReference>
<dbReference type="Gene3D" id="1.20.5.190">
    <property type="match status" value="3"/>
</dbReference>
<dbReference type="Gene3D" id="1.20.58.530">
    <property type="match status" value="1"/>
</dbReference>
<dbReference type="Gene3D" id="3.30.70.1590">
    <property type="match status" value="1"/>
</dbReference>
<dbReference type="Gene3D" id="3.40.850.10">
    <property type="entry name" value="Kinesin motor domain"/>
    <property type="match status" value="1"/>
</dbReference>
<dbReference type="Gene3D" id="1.20.120.720">
    <property type="entry name" value="Myosin VI head, motor domain, U50 subdomain"/>
    <property type="match status" value="1"/>
</dbReference>
<dbReference type="InterPro" id="IPR002710">
    <property type="entry name" value="Dilute_dom"/>
</dbReference>
<dbReference type="InterPro" id="IPR000048">
    <property type="entry name" value="IQ_motif_EF-hand-BS"/>
</dbReference>
<dbReference type="InterPro" id="IPR036961">
    <property type="entry name" value="Kinesin_motor_dom_sf"/>
</dbReference>
<dbReference type="InterPro" id="IPR001609">
    <property type="entry name" value="Myosin_head_motor_dom-like"/>
</dbReference>
<dbReference type="InterPro" id="IPR004009">
    <property type="entry name" value="Myosin_N"/>
</dbReference>
<dbReference type="InterPro" id="IPR037975">
    <property type="entry name" value="MyosinXI_CBD"/>
</dbReference>
<dbReference type="InterPro" id="IPR036018">
    <property type="entry name" value="MYSc_Myo11"/>
</dbReference>
<dbReference type="InterPro" id="IPR027417">
    <property type="entry name" value="P-loop_NTPase"/>
</dbReference>
<dbReference type="PANTHER" id="PTHR13140">
    <property type="entry name" value="MYOSIN"/>
    <property type="match status" value="1"/>
</dbReference>
<dbReference type="PANTHER" id="PTHR13140:SF792">
    <property type="entry name" value="MYOSIN-9"/>
    <property type="match status" value="1"/>
</dbReference>
<dbReference type="Pfam" id="PF01843">
    <property type="entry name" value="DIL"/>
    <property type="match status" value="1"/>
</dbReference>
<dbReference type="Pfam" id="PF00612">
    <property type="entry name" value="IQ"/>
    <property type="match status" value="2"/>
</dbReference>
<dbReference type="Pfam" id="PF00063">
    <property type="entry name" value="Myosin_head"/>
    <property type="match status" value="1"/>
</dbReference>
<dbReference type="Pfam" id="PF02736">
    <property type="entry name" value="Myosin_N"/>
    <property type="match status" value="1"/>
</dbReference>
<dbReference type="PRINTS" id="PR00193">
    <property type="entry name" value="MYOSINHEAVY"/>
</dbReference>
<dbReference type="SMART" id="SM01132">
    <property type="entry name" value="DIL"/>
    <property type="match status" value="1"/>
</dbReference>
<dbReference type="SMART" id="SM00015">
    <property type="entry name" value="IQ"/>
    <property type="match status" value="6"/>
</dbReference>
<dbReference type="SMART" id="SM00242">
    <property type="entry name" value="MYSc"/>
    <property type="match status" value="1"/>
</dbReference>
<dbReference type="SUPFAM" id="SSF52540">
    <property type="entry name" value="P-loop containing nucleoside triphosphate hydrolases"/>
    <property type="match status" value="2"/>
</dbReference>
<dbReference type="PROSITE" id="PS51126">
    <property type="entry name" value="DILUTE"/>
    <property type="match status" value="1"/>
</dbReference>
<dbReference type="PROSITE" id="PS50096">
    <property type="entry name" value="IQ"/>
    <property type="match status" value="6"/>
</dbReference>
<dbReference type="PROSITE" id="PS51456">
    <property type="entry name" value="MYOSIN_MOTOR"/>
    <property type="match status" value="1"/>
</dbReference>
<dbReference type="PROSITE" id="PS51844">
    <property type="entry name" value="SH3_LIKE"/>
    <property type="match status" value="1"/>
</dbReference>
<organism>
    <name type="scientific">Arabidopsis thaliana</name>
    <name type="common">Mouse-ear cress</name>
    <dbReference type="NCBI Taxonomy" id="3702"/>
    <lineage>
        <taxon>Eukaryota</taxon>
        <taxon>Viridiplantae</taxon>
        <taxon>Streptophyta</taxon>
        <taxon>Embryophyta</taxon>
        <taxon>Tracheophyta</taxon>
        <taxon>Spermatophyta</taxon>
        <taxon>Magnoliopsida</taxon>
        <taxon>eudicotyledons</taxon>
        <taxon>Gunneridae</taxon>
        <taxon>Pentapetalae</taxon>
        <taxon>rosids</taxon>
        <taxon>malvids</taxon>
        <taxon>Brassicales</taxon>
        <taxon>Brassicaceae</taxon>
        <taxon>Camelineae</taxon>
        <taxon>Arabidopsis</taxon>
    </lineage>
</organism>
<protein>
    <recommendedName>
        <fullName>Myosin-9</fullName>
    </recommendedName>
    <alternativeName>
        <fullName>Myosin XI C</fullName>
        <shortName>AtXIC</shortName>
    </alternativeName>
</protein>
<reference key="1">
    <citation type="journal article" date="2000" name="Nature">
        <title>Sequence and analysis of chromosome 1 of the plant Arabidopsis thaliana.</title>
        <authorList>
            <person name="Theologis A."/>
            <person name="Ecker J.R."/>
            <person name="Palm C.J."/>
            <person name="Federspiel N.A."/>
            <person name="Kaul S."/>
            <person name="White O."/>
            <person name="Alonso J."/>
            <person name="Altafi H."/>
            <person name="Araujo R."/>
            <person name="Bowman C.L."/>
            <person name="Brooks S.Y."/>
            <person name="Buehler E."/>
            <person name="Chan A."/>
            <person name="Chao Q."/>
            <person name="Chen H."/>
            <person name="Cheuk R.F."/>
            <person name="Chin C.W."/>
            <person name="Chung M.K."/>
            <person name="Conn L."/>
            <person name="Conway A.B."/>
            <person name="Conway A.R."/>
            <person name="Creasy T.H."/>
            <person name="Dewar K."/>
            <person name="Dunn P."/>
            <person name="Etgu P."/>
            <person name="Feldblyum T.V."/>
            <person name="Feng J.-D."/>
            <person name="Fong B."/>
            <person name="Fujii C.Y."/>
            <person name="Gill J.E."/>
            <person name="Goldsmith A.D."/>
            <person name="Haas B."/>
            <person name="Hansen N.F."/>
            <person name="Hughes B."/>
            <person name="Huizar L."/>
            <person name="Hunter J.L."/>
            <person name="Jenkins J."/>
            <person name="Johnson-Hopson C."/>
            <person name="Khan S."/>
            <person name="Khaykin E."/>
            <person name="Kim C.J."/>
            <person name="Koo H.L."/>
            <person name="Kremenetskaia I."/>
            <person name="Kurtz D.B."/>
            <person name="Kwan A."/>
            <person name="Lam B."/>
            <person name="Langin-Hooper S."/>
            <person name="Lee A."/>
            <person name="Lee J.M."/>
            <person name="Lenz C.A."/>
            <person name="Li J.H."/>
            <person name="Li Y.-P."/>
            <person name="Lin X."/>
            <person name="Liu S.X."/>
            <person name="Liu Z.A."/>
            <person name="Luros J.S."/>
            <person name="Maiti R."/>
            <person name="Marziali A."/>
            <person name="Militscher J."/>
            <person name="Miranda M."/>
            <person name="Nguyen M."/>
            <person name="Nierman W.C."/>
            <person name="Osborne B.I."/>
            <person name="Pai G."/>
            <person name="Peterson J."/>
            <person name="Pham P.K."/>
            <person name="Rizzo M."/>
            <person name="Rooney T."/>
            <person name="Rowley D."/>
            <person name="Sakano H."/>
            <person name="Salzberg S.L."/>
            <person name="Schwartz J.R."/>
            <person name="Shinn P."/>
            <person name="Southwick A.M."/>
            <person name="Sun H."/>
            <person name="Tallon L.J."/>
            <person name="Tambunga G."/>
            <person name="Toriumi M.J."/>
            <person name="Town C.D."/>
            <person name="Utterback T."/>
            <person name="Van Aken S."/>
            <person name="Vaysberg M."/>
            <person name="Vysotskaia V.S."/>
            <person name="Walker M."/>
            <person name="Wu D."/>
            <person name="Yu G."/>
            <person name="Fraser C.M."/>
            <person name="Venter J.C."/>
            <person name="Davis R.W."/>
        </authorList>
    </citation>
    <scope>NUCLEOTIDE SEQUENCE [LARGE SCALE GENOMIC DNA]</scope>
    <source>
        <strain>cv. Columbia</strain>
    </source>
</reference>
<reference key="2">
    <citation type="journal article" date="2017" name="Plant J.">
        <title>Araport11: a complete reannotation of the Arabidopsis thaliana reference genome.</title>
        <authorList>
            <person name="Cheng C.Y."/>
            <person name="Krishnakumar V."/>
            <person name="Chan A.P."/>
            <person name="Thibaud-Nissen F."/>
            <person name="Schobel S."/>
            <person name="Town C.D."/>
        </authorList>
    </citation>
    <scope>GENOME REANNOTATION</scope>
    <source>
        <strain>cv. Columbia</strain>
    </source>
</reference>
<reference key="3">
    <citation type="journal article" date="2004" name="Genome Res.">
        <title>Whole genome sequence comparisons and 'full-length' cDNA sequences: a combined approach to evaluate and improve Arabidopsis genome annotation.</title>
        <authorList>
            <person name="Castelli V."/>
            <person name="Aury J.-M."/>
            <person name="Jaillon O."/>
            <person name="Wincker P."/>
            <person name="Clepet C."/>
            <person name="Menard M."/>
            <person name="Cruaud C."/>
            <person name="Quetier F."/>
            <person name="Scarpelli C."/>
            <person name="Schaechter V."/>
            <person name="Temple G."/>
            <person name="Caboche M."/>
            <person name="Weissenbach J."/>
            <person name="Salanoubat M."/>
        </authorList>
    </citation>
    <scope>NUCLEOTIDE SEQUENCE [LARGE SCALE MRNA] OF 1078-1538</scope>
    <source>
        <strain>cv. Columbia</strain>
    </source>
</reference>
<reference key="4">
    <citation type="journal article" date="2000" name="J. Cell Sci.">
        <title>A myosin family tree.</title>
        <authorList>
            <person name="Hodge T."/>
            <person name="Cope M.J."/>
        </authorList>
    </citation>
    <scope>GENE FAMILY</scope>
</reference>
<reference key="5">
    <citation type="journal article" date="2001" name="Genome Biol.">
        <title>Analysis of the myosins encoded in the recently completed Arabidopsis thaliana genome sequence.</title>
        <authorList>
            <person name="Reddy A.S."/>
            <person name="Day I.S."/>
        </authorList>
    </citation>
    <scope>GENE FAMILY</scope>
</reference>
<reference key="6">
    <citation type="journal article" date="2009" name="Plant Physiol.">
        <title>A comparative study of the involvement of 17 Arabidopsis myosin family members on the motility of Golgi and other organelles.</title>
        <authorList>
            <person name="Avisar D."/>
            <person name="Abu-Abied M."/>
            <person name="Belausov E."/>
            <person name="Sadot E."/>
            <person name="Hawes C."/>
            <person name="Sparkes I.A."/>
        </authorList>
    </citation>
    <scope>FUNCTION</scope>
</reference>
<reference key="7">
    <citation type="journal article" date="2011" name="Plant Physiol.">
        <title>Expression, splicing, and evolution of the myosin gene family in plants.</title>
        <authorList>
            <person name="Peremyslov V.V."/>
            <person name="Mockler T.C."/>
            <person name="Filichkin S.A."/>
            <person name="Fox S.E."/>
            <person name="Jaiswal P."/>
            <person name="Makarova K.S."/>
            <person name="Koonin E.V."/>
            <person name="Dolja V.V."/>
        </authorList>
    </citation>
    <scope>GENE FAMILY</scope>
    <scope>NOMENCLATURE</scope>
</reference>
<reference key="8">
    <citation type="journal article" date="2012" name="J. Exp. Bot.">
        <title>Myosin XIK is a major player in cytoplasm dynamics and is regulated by two amino acids in its tail.</title>
        <authorList>
            <person name="Avisar D."/>
            <person name="Abu-Abied M."/>
            <person name="Belausov E."/>
            <person name="Sadot E."/>
        </authorList>
    </citation>
    <scope>FUNCTION</scope>
</reference>
<evidence type="ECO:0000250" key="1"/>
<evidence type="ECO:0000255" key="2"/>
<evidence type="ECO:0000255" key="3">
    <source>
        <dbReference type="PROSITE-ProRule" id="PRU00116"/>
    </source>
</evidence>
<evidence type="ECO:0000255" key="4">
    <source>
        <dbReference type="PROSITE-ProRule" id="PRU00503"/>
    </source>
</evidence>
<evidence type="ECO:0000255" key="5">
    <source>
        <dbReference type="PROSITE-ProRule" id="PRU00782"/>
    </source>
</evidence>
<evidence type="ECO:0000255" key="6">
    <source>
        <dbReference type="PROSITE-ProRule" id="PRU01190"/>
    </source>
</evidence>
<evidence type="ECO:0000256" key="7">
    <source>
        <dbReference type="SAM" id="MobiDB-lite"/>
    </source>
</evidence>
<evidence type="ECO:0000269" key="8">
    <source>
    </source>
</evidence>
<evidence type="ECO:0000269" key="9">
    <source>
    </source>
</evidence>
<evidence type="ECO:0000305" key="10"/>
<comment type="function">
    <text evidence="8 9">Myosin heavy chain that is required for the cell cycle-regulated transport of various organelles and proteins for their segregation. Functions by binding with its tail domain to receptor proteins on organelles and exerting force with its N-terminal motor domain against actin filaments, thereby transporting its cargo along polarized actin cables. Involved in trafficking of Golgi stacks and mitochondria.</text>
</comment>
<comment type="subunit">
    <text evidence="1">Homodimer.</text>
</comment>
<comment type="domain">
    <text evidence="1">IQ domain mediates interaction with calmodulin.</text>
</comment>
<comment type="domain">
    <text evidence="1">The tail domain is a globular cargo-binding domain.</text>
</comment>
<comment type="similarity">
    <text evidence="10">Belongs to the TRAFAC class myosin-kinesin ATPase superfamily. Myosin family. Plant myosin class XI subfamily.</text>
</comment>
<comment type="sequence caution" evidence="10">
    <conflict type="erroneous gene model prediction">
        <sequence resource="EMBL-CDS" id="AAF99762"/>
    </conflict>
    <text>The predicted gene has been split into 2 genes: At1g08720 and At1g08730.</text>
</comment>
<sequence>MVRECFTFLNIFVLHSIGSHVWFEDPEVAWIDGEVEKINGQEVVIQATTGKKVTAKLSKIYPKDVEAPAGGVDDMTKLSYLHEPGVLQNLKIRYELNEIYTYTGNILIAINPFQRLPHIYDAHMMQQYKGAPLGELSPHVFAVADVAYRAMINEGKSNSILVSGESGAGKTETTKMLMRYLAYLGGRAVTEGRTVEQQVLESNPVLEAFGNAKTVRNNNSSRFGKFVEIQFDKQGRISGAAIRTYLLERSRVCQISDPERNYHCFYLLCAAPQEEIEKYKLGHPKTFHYLNQSKCFELVGISDAHDYLATRRAMDIVGISEKEQEAIFRVVAAILHIGNIDFTKGKEVDSSVPKDEKSKFHLKTAAELLMCDLKALEDALCKRVMITPEEVIKRSLDPQSAVTSRDGLAKTVYSRLFDWLVDKINKSIGQDANSRSLIGVLDIYGFESFKTNSFEQFCINFTNEKLQQHFNQHVFKMEQEEYTKEAIDWSYIEFVDNQDVLDLIEKKPGGIVALLDEACMFPKSTHETFANKLYQTFKTHKRFIKPKLSRTDFAVAHYAGEVLYQSELFLDKNKDYVIPEHQDLLGASKCPFVVGLFPPLPEETSKSSKFSSIGSRFKLQLQQLMETLNCTEPHYIRCVKPNNLLKPAIFENVNIMQQLRCGGVLEAIRISCAGYPTRKPFFEFINRFGLLSPAALEGNFDEKVACQKILDNMGLKGYQIGKTKVFLRAGQMAELDARRAEVLSSAAKKIQRRIRTHQAQKRFIVLRKATISLQAICRGRLSCKHYDNLRREAAAVKIQKNGRRHYSRKSYKKLHVASLVVQTGLRAMAARKQFRFRKQTKAATIVQAQWRCHRAISYYKKLKNGVVLSQTRWRGRLAKRELRKLKMAARETGALKEAKDMLEKKVEELTYRVQLEKRSRGDLEEAKTQEILKLKSSFEEMRKKVDETNALLLKEREAAKKAAEEAPPVIKETQILVEDTKKIELMTEELESVKVTLENEKQRADDAVRKFEEAQESLEDKKKKLEETEKKGQQLQESLTRMEEKCSNLESENKVLRQQAVSMAPNKFLSGRSRSILQRGSESGHLAVDARSNLDLHSHSINHRDPSEVEDKPQKSLNEKQQENQDLLIRSIVQHLGFQGNRPITACIIYKCLLQWRSFEVERTSVFDRIIQTIGHAIETQDNNNTLAYWLSNTSTLLLLLQRTLKASGAAGMAPQRRRSSSATLFGRMSQSFRGAPPGVNLAMINGAAGGGADTFRQVEAKYPALLFKQQLTAYVEKIYGMIRDNLKKEISPLLGLCIQAPRTSRASLVKGASRSVGNTAAQQALIAHWQGIVKSLTNFLNTLKSNNVPSFLVRKVFTQIFSFINVQLFNSLLLRRECCSFSNGEYVKAGLSELEHWCFKATNEYAGSSWDELKHIRQAIGFLVVHQKPKKTLDEISHDLCPVLSIQQLYRISTMYWDDKYGTHSVSPDVIANMRVLMTEDSNNAVSNSFLLDDDSSIPFSVDDLSKSMEKFEIADIEPPPLIRENSGFSFLLPVSE</sequence>
<proteinExistence type="evidence at transcript level"/>